<name>ACADM_PANTR</name>
<keyword id="KW-0007">Acetylation</keyword>
<keyword id="KW-0274">FAD</keyword>
<keyword id="KW-0276">Fatty acid metabolism</keyword>
<keyword id="KW-0285">Flavoprotein</keyword>
<keyword id="KW-0443">Lipid metabolism</keyword>
<keyword id="KW-0496">Mitochondrion</keyword>
<keyword id="KW-0560">Oxidoreductase</keyword>
<keyword id="KW-0597">Phosphoprotein</keyword>
<keyword id="KW-1185">Reference proteome</keyword>
<keyword id="KW-0809">Transit peptide</keyword>
<accession>A5A6I0</accession>
<gene>
    <name evidence="2" type="primary">ACADM</name>
</gene>
<reference key="1">
    <citation type="journal article" date="2007" name="Gene">
        <title>Mapping of chimpanzee full-length cDNAs onto the human genome unveils large potential divergence of the transcriptome.</title>
        <authorList>
            <person name="Sakate R."/>
            <person name="Suto Y."/>
            <person name="Imanishi T."/>
            <person name="Tanoue T."/>
            <person name="Hida M."/>
            <person name="Hayasaka I."/>
            <person name="Kusuda J."/>
            <person name="Gojobori T."/>
            <person name="Hashimoto K."/>
            <person name="Hirai M."/>
        </authorList>
    </citation>
    <scope>NUCLEOTIDE SEQUENCE [MRNA]</scope>
    <source>
        <tissue>Cerebellum</tissue>
    </source>
</reference>
<protein>
    <recommendedName>
        <fullName evidence="2">Medium-chain specific acyl-CoA dehydrogenase, mitochondrial</fullName>
        <shortName evidence="2">MCAD</shortName>
        <ecNumber evidence="2">1.3.8.7</ecNumber>
    </recommendedName>
</protein>
<sequence length="421" mass="46607">MAAGFGRCCRVLRSISRFQWRSQHTKANRQREPGLGFSFEFTEQQKEFQATARKFAREEIIPVAAEYDKTGEYPVPLIRRAWELGLMNTHIPENCGGLGLGTFDACLISEELAYGCTGVQTAIEGNSLGQMPIIIAGNDQQKKKYLGRMTEEPLMCAYCVTEPGAGSDVAGIKTKAEKKGDEYIINGQKMWITNGGKANWYFLLARSDPDPKAPANKAFTGFIVEADTPGIQIGRKELNMGQRCSDTRGIVFEDVKVPRENVLIGDGAGFKVAMGAFDKTRPVVAAGAVGLAQRALDEATKYALERKTFGKLLVEHQAISFMLAEMAMKVELARMSYQRAAWEVDSGRRNTYYASIAKAFAGDIANQLATDAVQILGGNGFNTEYPVEKLMRDAKIYQIYEGTSQIQRLIVAREHIDKYKN</sequence>
<organism>
    <name type="scientific">Pan troglodytes</name>
    <name type="common">Chimpanzee</name>
    <dbReference type="NCBI Taxonomy" id="9598"/>
    <lineage>
        <taxon>Eukaryota</taxon>
        <taxon>Metazoa</taxon>
        <taxon>Chordata</taxon>
        <taxon>Craniata</taxon>
        <taxon>Vertebrata</taxon>
        <taxon>Euteleostomi</taxon>
        <taxon>Mammalia</taxon>
        <taxon>Eutheria</taxon>
        <taxon>Euarchontoglires</taxon>
        <taxon>Primates</taxon>
        <taxon>Haplorrhini</taxon>
        <taxon>Catarrhini</taxon>
        <taxon>Hominidae</taxon>
        <taxon>Pan</taxon>
    </lineage>
</organism>
<feature type="transit peptide" description="Mitochondrion" evidence="1">
    <location>
        <begin position="1"/>
        <end position="25"/>
    </location>
</feature>
<feature type="chain" id="PRO_0000295306" description="Medium-chain specific acyl-CoA dehydrogenase, mitochondrial">
    <location>
        <begin position="26"/>
        <end position="421"/>
    </location>
</feature>
<feature type="active site" description="Proton acceptor" evidence="3">
    <location>
        <position position="401"/>
    </location>
</feature>
<feature type="binding site" description="in other chain" evidence="3">
    <location>
        <begin position="158"/>
        <end position="167"/>
    </location>
    <ligand>
        <name>FAD</name>
        <dbReference type="ChEBI" id="CHEBI:57692"/>
        <note>ligand shared between dimeric partners</note>
    </ligand>
</feature>
<feature type="binding site" evidence="3">
    <location>
        <position position="167"/>
    </location>
    <ligand>
        <name>octanoyl-CoA</name>
        <dbReference type="ChEBI" id="CHEBI:57386"/>
    </ligand>
</feature>
<feature type="binding site" description="in other chain" evidence="3">
    <location>
        <begin position="191"/>
        <end position="193"/>
    </location>
    <ligand>
        <name>FAD</name>
        <dbReference type="ChEBI" id="CHEBI:57692"/>
        <note>ligand shared between dimeric partners</note>
    </ligand>
</feature>
<feature type="binding site" evidence="3">
    <location>
        <position position="278"/>
    </location>
    <ligand>
        <name>octanoyl-CoA</name>
        <dbReference type="ChEBI" id="CHEBI:57386"/>
    </ligand>
</feature>
<feature type="binding site" evidence="3">
    <location>
        <position position="281"/>
    </location>
    <ligand>
        <name>octanoyl-CoA</name>
        <dbReference type="ChEBI" id="CHEBI:57386"/>
    </ligand>
</feature>
<feature type="binding site" evidence="3">
    <location>
        <begin position="306"/>
        <end position="308"/>
    </location>
    <ligand>
        <name>FAD</name>
        <dbReference type="ChEBI" id="CHEBI:57692"/>
        <note>ligand shared between dimeric partners</note>
    </ligand>
</feature>
<feature type="binding site" description="in other chain" evidence="3">
    <location>
        <begin position="316"/>
        <end position="317"/>
    </location>
    <ligand>
        <name>FAD</name>
        <dbReference type="ChEBI" id="CHEBI:57692"/>
        <note>ligand shared between dimeric partners</note>
    </ligand>
</feature>
<feature type="binding site" evidence="3">
    <location>
        <position position="349"/>
    </location>
    <ligand>
        <name>octanoyl-CoA</name>
        <dbReference type="ChEBI" id="CHEBI:57386"/>
    </ligand>
</feature>
<feature type="binding site" evidence="3">
    <location>
        <position position="351"/>
    </location>
    <ligand>
        <name>octanoyl-CoA</name>
        <dbReference type="ChEBI" id="CHEBI:57386"/>
    </ligand>
</feature>
<feature type="binding site" evidence="3">
    <location>
        <begin position="374"/>
        <end position="378"/>
    </location>
    <ligand>
        <name>FAD</name>
        <dbReference type="ChEBI" id="CHEBI:57692"/>
        <note>ligand shared between dimeric partners</note>
    </ligand>
</feature>
<feature type="binding site" evidence="3">
    <location>
        <position position="401"/>
    </location>
    <ligand>
        <name>octanoyl-CoA</name>
        <dbReference type="ChEBI" id="CHEBI:57386"/>
    </ligand>
</feature>
<feature type="binding site" description="in other chain" evidence="3">
    <location>
        <begin position="402"/>
        <end position="405"/>
    </location>
    <ligand>
        <name>FAD</name>
        <dbReference type="ChEBI" id="CHEBI:57692"/>
        <note>ligand shared between dimeric partners</note>
    </ligand>
</feature>
<feature type="modified residue" description="N6-acetyllysine; alternate" evidence="4">
    <location>
        <position position="69"/>
    </location>
</feature>
<feature type="modified residue" description="N6-succinyllysine; alternate" evidence="4">
    <location>
        <position position="69"/>
    </location>
</feature>
<feature type="modified residue" description="N6-succinyllysine" evidence="4">
    <location>
        <position position="179"/>
    </location>
</feature>
<feature type="modified residue" description="N6-acetyllysine; alternate" evidence="4">
    <location>
        <position position="212"/>
    </location>
</feature>
<feature type="modified residue" description="N6-succinyllysine; alternate" evidence="4">
    <location>
        <position position="212"/>
    </location>
</feature>
<feature type="modified residue" description="N6-acetyllysine; alternate" evidence="4">
    <location>
        <position position="217"/>
    </location>
</feature>
<feature type="modified residue" description="N6-succinyllysine; alternate" evidence="4">
    <location>
        <position position="217"/>
    </location>
</feature>
<feature type="modified residue" description="N6-acetyllysine; alternate" evidence="4">
    <location>
        <position position="271"/>
    </location>
</feature>
<feature type="modified residue" description="N6-succinyllysine; alternate" evidence="4">
    <location>
        <position position="271"/>
    </location>
</feature>
<feature type="modified residue" description="N6-acetyllysine" evidence="2">
    <location>
        <position position="279"/>
    </location>
</feature>
<feature type="modified residue" description="N6-acetyllysine" evidence="2">
    <location>
        <position position="301"/>
    </location>
</feature>
<feature type="modified residue" description="Phosphothreonine" evidence="4">
    <location>
        <position position="351"/>
    </location>
</feature>
<evidence type="ECO:0000250" key="1">
    <source>
        <dbReference type="UniProtKB" id="P08503"/>
    </source>
</evidence>
<evidence type="ECO:0000250" key="2">
    <source>
        <dbReference type="UniProtKB" id="P11310"/>
    </source>
</evidence>
<evidence type="ECO:0000250" key="3">
    <source>
        <dbReference type="UniProtKB" id="P41367"/>
    </source>
</evidence>
<evidence type="ECO:0000250" key="4">
    <source>
        <dbReference type="UniProtKB" id="P45952"/>
    </source>
</evidence>
<evidence type="ECO:0000305" key="5"/>
<comment type="function">
    <text evidence="2">Medium-chain specific acyl-CoA dehydrogenase is one of the acyl-CoA dehydrogenases that catalyze the first step of mitochondrial fatty acid beta-oxidation, an aerobic process breaking down fatty acids into acetyl-CoA and allowing the production of energy from fats. The first step of fatty acid beta-oxidation consists in the removal of one hydrogen from C-2 and C-3 of the straight-chain fatty acyl-CoA thioester, resulting in the formation of trans-2-enoyl-CoA. Electron transfer flavoprotein (ETF) is the electron acceptor that transfers electrons to the main mitochondrial respiratory chain via ETF-ubiquinone oxidoreductase (ETF dehydrogenase). Among the different mitochondrial acyl-CoA dehydrogenases, medium-chain specific acyl-CoA dehydrogenase acts specifically on acyl-CoAs with saturated 6 to 12 carbons long primary chains.</text>
</comment>
<comment type="catalytic activity">
    <reaction evidence="2">
        <text>a medium-chain 2,3-saturated fatty acyl-CoA + oxidized [electron-transfer flavoprotein] + H(+) = a medium-chain (2E)-enoyl-CoA + reduced [electron-transfer flavoprotein]</text>
        <dbReference type="Rhea" id="RHEA:14477"/>
        <dbReference type="Rhea" id="RHEA-COMP:10685"/>
        <dbReference type="Rhea" id="RHEA-COMP:10686"/>
        <dbReference type="ChEBI" id="CHEBI:15378"/>
        <dbReference type="ChEBI" id="CHEBI:57692"/>
        <dbReference type="ChEBI" id="CHEBI:58307"/>
        <dbReference type="ChEBI" id="CHEBI:83723"/>
        <dbReference type="ChEBI" id="CHEBI:83726"/>
        <dbReference type="EC" id="1.3.8.7"/>
    </reaction>
    <physiologicalReaction direction="left-to-right" evidence="2">
        <dbReference type="Rhea" id="RHEA:14478"/>
    </physiologicalReaction>
</comment>
<comment type="catalytic activity">
    <reaction evidence="1">
        <text>pentanoyl-CoA + oxidized [electron-transfer flavoprotein] + H(+) = (2E)-pentenoyl-CoA + reduced [electron-transfer flavoprotein]</text>
        <dbReference type="Rhea" id="RHEA:43456"/>
        <dbReference type="Rhea" id="RHEA-COMP:10685"/>
        <dbReference type="Rhea" id="RHEA-COMP:10686"/>
        <dbReference type="ChEBI" id="CHEBI:15378"/>
        <dbReference type="ChEBI" id="CHEBI:57389"/>
        <dbReference type="ChEBI" id="CHEBI:57692"/>
        <dbReference type="ChEBI" id="CHEBI:58307"/>
        <dbReference type="ChEBI" id="CHEBI:86160"/>
    </reaction>
    <physiologicalReaction direction="left-to-right" evidence="1">
        <dbReference type="Rhea" id="RHEA:43457"/>
    </physiologicalReaction>
</comment>
<comment type="catalytic activity">
    <reaction evidence="2">
        <text>hexanoyl-CoA + oxidized [electron-transfer flavoprotein] + H(+) = (2E)-hexenoyl-CoA + reduced [electron-transfer flavoprotein]</text>
        <dbReference type="Rhea" id="RHEA:43464"/>
        <dbReference type="Rhea" id="RHEA-COMP:10685"/>
        <dbReference type="Rhea" id="RHEA-COMP:10686"/>
        <dbReference type="ChEBI" id="CHEBI:15378"/>
        <dbReference type="ChEBI" id="CHEBI:57692"/>
        <dbReference type="ChEBI" id="CHEBI:58307"/>
        <dbReference type="ChEBI" id="CHEBI:62077"/>
        <dbReference type="ChEBI" id="CHEBI:62620"/>
    </reaction>
    <physiologicalReaction direction="left-to-right" evidence="2">
        <dbReference type="Rhea" id="RHEA:43465"/>
    </physiologicalReaction>
</comment>
<comment type="catalytic activity">
    <reaction evidence="2">
        <text>octanoyl-CoA + oxidized [electron-transfer flavoprotein] + H(+) = (2E)-octenoyl-CoA + reduced [electron-transfer flavoprotein]</text>
        <dbReference type="Rhea" id="RHEA:48180"/>
        <dbReference type="Rhea" id="RHEA-COMP:10685"/>
        <dbReference type="Rhea" id="RHEA-COMP:10686"/>
        <dbReference type="ChEBI" id="CHEBI:15378"/>
        <dbReference type="ChEBI" id="CHEBI:57386"/>
        <dbReference type="ChEBI" id="CHEBI:57692"/>
        <dbReference type="ChEBI" id="CHEBI:58307"/>
        <dbReference type="ChEBI" id="CHEBI:62242"/>
    </reaction>
    <physiologicalReaction direction="left-to-right" evidence="2">
        <dbReference type="Rhea" id="RHEA:48181"/>
    </physiologicalReaction>
</comment>
<comment type="catalytic activity">
    <reaction evidence="2">
        <text>decanoyl-CoA + oxidized [electron-transfer flavoprotein] + H(+) = (2E)-decenoyl-CoA + reduced [electron-transfer flavoprotein]</text>
        <dbReference type="Rhea" id="RHEA:48176"/>
        <dbReference type="Rhea" id="RHEA-COMP:10685"/>
        <dbReference type="Rhea" id="RHEA-COMP:10686"/>
        <dbReference type="ChEBI" id="CHEBI:15378"/>
        <dbReference type="ChEBI" id="CHEBI:57692"/>
        <dbReference type="ChEBI" id="CHEBI:58307"/>
        <dbReference type="ChEBI" id="CHEBI:61406"/>
        <dbReference type="ChEBI" id="CHEBI:61430"/>
    </reaction>
    <physiologicalReaction direction="left-to-right" evidence="2">
        <dbReference type="Rhea" id="RHEA:48177"/>
    </physiologicalReaction>
</comment>
<comment type="catalytic activity">
    <reaction evidence="2">
        <text>dodecanoyl-CoA + oxidized [electron-transfer flavoprotein] + H(+) = (2E)-dodecenoyl-CoA + reduced [electron-transfer flavoprotein]</text>
        <dbReference type="Rhea" id="RHEA:47296"/>
        <dbReference type="Rhea" id="RHEA-COMP:10685"/>
        <dbReference type="Rhea" id="RHEA-COMP:10686"/>
        <dbReference type="ChEBI" id="CHEBI:15378"/>
        <dbReference type="ChEBI" id="CHEBI:57330"/>
        <dbReference type="ChEBI" id="CHEBI:57375"/>
        <dbReference type="ChEBI" id="CHEBI:57692"/>
        <dbReference type="ChEBI" id="CHEBI:58307"/>
    </reaction>
    <physiologicalReaction direction="left-to-right" evidence="2">
        <dbReference type="Rhea" id="RHEA:47297"/>
    </physiologicalReaction>
</comment>
<comment type="catalytic activity">
    <reaction evidence="2">
        <text>tetradecanoyl-CoA + oxidized [electron-transfer flavoprotein] + H(+) = (2E)-tetradecenoyl-CoA + reduced [electron-transfer flavoprotein]</text>
        <dbReference type="Rhea" id="RHEA:47316"/>
        <dbReference type="Rhea" id="RHEA-COMP:10685"/>
        <dbReference type="Rhea" id="RHEA-COMP:10686"/>
        <dbReference type="ChEBI" id="CHEBI:15378"/>
        <dbReference type="ChEBI" id="CHEBI:57385"/>
        <dbReference type="ChEBI" id="CHEBI:57692"/>
        <dbReference type="ChEBI" id="CHEBI:58307"/>
        <dbReference type="ChEBI" id="CHEBI:61405"/>
    </reaction>
    <physiologicalReaction direction="left-to-right" evidence="2">
        <dbReference type="Rhea" id="RHEA:47317"/>
    </physiologicalReaction>
</comment>
<comment type="catalytic activity">
    <reaction evidence="2">
        <text>oxidized [electron-transfer flavoprotein] + hexadecanoyl-CoA + H(+) = (2E)-hexadecenoyl-CoA + reduced [electron-transfer flavoprotein]</text>
        <dbReference type="Rhea" id="RHEA:43448"/>
        <dbReference type="Rhea" id="RHEA-COMP:10685"/>
        <dbReference type="Rhea" id="RHEA-COMP:10686"/>
        <dbReference type="ChEBI" id="CHEBI:15378"/>
        <dbReference type="ChEBI" id="CHEBI:57379"/>
        <dbReference type="ChEBI" id="CHEBI:57692"/>
        <dbReference type="ChEBI" id="CHEBI:58307"/>
        <dbReference type="ChEBI" id="CHEBI:61526"/>
    </reaction>
    <physiologicalReaction direction="left-to-right" evidence="2">
        <dbReference type="Rhea" id="RHEA:43449"/>
    </physiologicalReaction>
</comment>
<comment type="cofactor">
    <cofactor evidence="2">
        <name>FAD</name>
        <dbReference type="ChEBI" id="CHEBI:57692"/>
    </cofactor>
</comment>
<comment type="pathway">
    <text evidence="2">Lipid metabolism; mitochondrial fatty acid beta-oxidation.</text>
</comment>
<comment type="subunit">
    <text evidence="2">Homotetramer. Interacts with the heterodimeric electron transfer flavoprotein ETF.</text>
</comment>
<comment type="subcellular location">
    <subcellularLocation>
        <location evidence="1">Mitochondrion matrix</location>
    </subcellularLocation>
</comment>
<comment type="PTM">
    <text evidence="2">Acetylated. Could occur at proximity of the cofactor-binding sites and reduce the catalytic activity. Could be deacetylated by SIRT3.</text>
</comment>
<comment type="similarity">
    <text evidence="5">Belongs to the acyl-CoA dehydrogenase family.</text>
</comment>
<dbReference type="EC" id="1.3.8.7" evidence="2"/>
<dbReference type="EMBL" id="AB222108">
    <property type="protein sequence ID" value="BAF62353.1"/>
    <property type="molecule type" value="mRNA"/>
</dbReference>
<dbReference type="RefSeq" id="NP_001104286.1">
    <property type="nucleotide sequence ID" value="NM_001110816.1"/>
</dbReference>
<dbReference type="RefSeq" id="XP_054520793.1">
    <property type="nucleotide sequence ID" value="XM_054664818.2"/>
</dbReference>
<dbReference type="SMR" id="A5A6I0"/>
<dbReference type="FunCoup" id="A5A6I0">
    <property type="interactions" value="1128"/>
</dbReference>
<dbReference type="STRING" id="9598.ENSPTRP00000052172"/>
<dbReference type="PaxDb" id="9598-ENSPTRP00000052172"/>
<dbReference type="GeneID" id="469356"/>
<dbReference type="KEGG" id="ptr:469356"/>
<dbReference type="CTD" id="34"/>
<dbReference type="eggNOG" id="KOG0140">
    <property type="taxonomic scope" value="Eukaryota"/>
</dbReference>
<dbReference type="HOGENOM" id="CLU_018204_0_2_1"/>
<dbReference type="InParanoid" id="A5A6I0"/>
<dbReference type="OrthoDB" id="7052at9604"/>
<dbReference type="TreeFam" id="TF105020"/>
<dbReference type="UniPathway" id="UPA00660"/>
<dbReference type="Proteomes" id="UP000002277">
    <property type="component" value="Unplaced"/>
</dbReference>
<dbReference type="GO" id="GO:0005737">
    <property type="term" value="C:cytoplasm"/>
    <property type="evidence" value="ECO:0000318"/>
    <property type="project" value="GO_Central"/>
</dbReference>
<dbReference type="GO" id="GO:0005759">
    <property type="term" value="C:mitochondrial matrix"/>
    <property type="evidence" value="ECO:0007669"/>
    <property type="project" value="UniProtKB-SubCell"/>
</dbReference>
<dbReference type="GO" id="GO:0005739">
    <property type="term" value="C:mitochondrion"/>
    <property type="evidence" value="ECO:0000318"/>
    <property type="project" value="GO_Central"/>
</dbReference>
<dbReference type="GO" id="GO:0050660">
    <property type="term" value="F:flavin adenine dinucleotide binding"/>
    <property type="evidence" value="ECO:0007669"/>
    <property type="project" value="InterPro"/>
</dbReference>
<dbReference type="GO" id="GO:0070991">
    <property type="term" value="F:medium-chain fatty acyl-CoA dehydrogenase activity"/>
    <property type="evidence" value="ECO:0000318"/>
    <property type="project" value="GO_Central"/>
</dbReference>
<dbReference type="GO" id="GO:0033539">
    <property type="term" value="P:fatty acid beta-oxidation using acyl-CoA dehydrogenase"/>
    <property type="evidence" value="ECO:0000250"/>
    <property type="project" value="UniProtKB"/>
</dbReference>
<dbReference type="GO" id="GO:0051793">
    <property type="term" value="P:medium-chain fatty acid catabolic process"/>
    <property type="evidence" value="ECO:0000318"/>
    <property type="project" value="GO_Central"/>
</dbReference>
<dbReference type="CDD" id="cd01157">
    <property type="entry name" value="MCAD"/>
    <property type="match status" value="1"/>
</dbReference>
<dbReference type="FunFam" id="1.10.540.10:FF:000010">
    <property type="entry name" value="Medium-chain specific acyl-CoA dehydrogenase, mitochondrial"/>
    <property type="match status" value="1"/>
</dbReference>
<dbReference type="FunFam" id="1.20.140.10:FF:000011">
    <property type="entry name" value="Medium-chain specific acyl-CoA dehydrogenase, mitochondrial"/>
    <property type="match status" value="1"/>
</dbReference>
<dbReference type="FunFam" id="2.40.110.10:FF:000007">
    <property type="entry name" value="Medium-chain specific acyl-CoA dehydrogenase, mitochondrial"/>
    <property type="match status" value="1"/>
</dbReference>
<dbReference type="Gene3D" id="1.10.540.10">
    <property type="entry name" value="Acyl-CoA dehydrogenase/oxidase, N-terminal domain"/>
    <property type="match status" value="1"/>
</dbReference>
<dbReference type="Gene3D" id="2.40.110.10">
    <property type="entry name" value="Butyryl-CoA Dehydrogenase, subunit A, domain 2"/>
    <property type="match status" value="1"/>
</dbReference>
<dbReference type="Gene3D" id="1.20.140.10">
    <property type="entry name" value="Butyryl-CoA Dehydrogenase, subunit A, domain 3"/>
    <property type="match status" value="1"/>
</dbReference>
<dbReference type="InterPro" id="IPR050741">
    <property type="entry name" value="Acyl-CoA_dehydrogenase"/>
</dbReference>
<dbReference type="InterPro" id="IPR006089">
    <property type="entry name" value="Acyl-CoA_DH_CS"/>
</dbReference>
<dbReference type="InterPro" id="IPR006091">
    <property type="entry name" value="Acyl-CoA_Oxase/DH_mid-dom"/>
</dbReference>
<dbReference type="InterPro" id="IPR046373">
    <property type="entry name" value="Acyl-CoA_Oxase/DH_mid-dom_sf"/>
</dbReference>
<dbReference type="InterPro" id="IPR036250">
    <property type="entry name" value="AcylCo_DH-like_C"/>
</dbReference>
<dbReference type="InterPro" id="IPR009075">
    <property type="entry name" value="AcylCo_DH/oxidase_C"/>
</dbReference>
<dbReference type="InterPro" id="IPR013786">
    <property type="entry name" value="AcylCoA_DH/ox_N"/>
</dbReference>
<dbReference type="InterPro" id="IPR037069">
    <property type="entry name" value="AcylCoA_DH/ox_N_sf"/>
</dbReference>
<dbReference type="InterPro" id="IPR009100">
    <property type="entry name" value="AcylCoA_DH/oxidase_NM_dom_sf"/>
</dbReference>
<dbReference type="InterPro" id="IPR034180">
    <property type="entry name" value="MCAD"/>
</dbReference>
<dbReference type="PANTHER" id="PTHR48083:SF2">
    <property type="entry name" value="MEDIUM-CHAIN SPECIFIC ACYL-COA DEHYDROGENASE, MITOCHONDRIAL"/>
    <property type="match status" value="1"/>
</dbReference>
<dbReference type="PANTHER" id="PTHR48083">
    <property type="entry name" value="MEDIUM-CHAIN SPECIFIC ACYL-COA DEHYDROGENASE, MITOCHONDRIAL-RELATED"/>
    <property type="match status" value="1"/>
</dbReference>
<dbReference type="Pfam" id="PF00441">
    <property type="entry name" value="Acyl-CoA_dh_1"/>
    <property type="match status" value="1"/>
</dbReference>
<dbReference type="Pfam" id="PF02770">
    <property type="entry name" value="Acyl-CoA_dh_M"/>
    <property type="match status" value="1"/>
</dbReference>
<dbReference type="Pfam" id="PF02771">
    <property type="entry name" value="Acyl-CoA_dh_N"/>
    <property type="match status" value="1"/>
</dbReference>
<dbReference type="PIRSF" id="PIRSF016578">
    <property type="entry name" value="HsaA"/>
    <property type="match status" value="1"/>
</dbReference>
<dbReference type="SUPFAM" id="SSF47203">
    <property type="entry name" value="Acyl-CoA dehydrogenase C-terminal domain-like"/>
    <property type="match status" value="1"/>
</dbReference>
<dbReference type="SUPFAM" id="SSF56645">
    <property type="entry name" value="Acyl-CoA dehydrogenase NM domain-like"/>
    <property type="match status" value="1"/>
</dbReference>
<dbReference type="PROSITE" id="PS00072">
    <property type="entry name" value="ACYL_COA_DH_1"/>
    <property type="match status" value="1"/>
</dbReference>
<dbReference type="PROSITE" id="PS00073">
    <property type="entry name" value="ACYL_COA_DH_2"/>
    <property type="match status" value="1"/>
</dbReference>
<proteinExistence type="evidence at transcript level"/>